<feature type="chain" id="PRO_0000075561" description="2-C-methyl-D-erythritol 4-phosphate cytidylyltransferase">
    <location>
        <begin position="1"/>
        <end position="211"/>
    </location>
</feature>
<feature type="site" description="Transition state stabilizer" evidence="1">
    <location>
        <position position="16"/>
    </location>
</feature>
<feature type="site" description="Transition state stabilizer" evidence="1">
    <location>
        <position position="23"/>
    </location>
</feature>
<feature type="site" description="Positions MEP for the nucleophilic attack" evidence="1">
    <location>
        <position position="141"/>
    </location>
</feature>
<feature type="site" description="Positions MEP for the nucleophilic attack" evidence="1">
    <location>
        <position position="197"/>
    </location>
</feature>
<comment type="function">
    <text evidence="1">Catalyzes the formation of 4-diphosphocytidyl-2-C-methyl-D-erythritol from CTP and 2-C-methyl-D-erythritol 4-phosphate (MEP).</text>
</comment>
<comment type="catalytic activity">
    <reaction>
        <text>2-C-methyl-D-erythritol 4-phosphate + CTP + H(+) = 4-CDP-2-C-methyl-D-erythritol + diphosphate</text>
        <dbReference type="Rhea" id="RHEA:13429"/>
        <dbReference type="ChEBI" id="CHEBI:15378"/>
        <dbReference type="ChEBI" id="CHEBI:33019"/>
        <dbReference type="ChEBI" id="CHEBI:37563"/>
        <dbReference type="ChEBI" id="CHEBI:57823"/>
        <dbReference type="ChEBI" id="CHEBI:58262"/>
        <dbReference type="EC" id="2.7.7.60"/>
    </reaction>
</comment>
<comment type="pathway">
    <text>Isoprenoid biosynthesis; isopentenyl diphosphate biosynthesis via DXP pathway; isopentenyl diphosphate from 1-deoxy-D-xylulose 5-phosphate: step 2/6.</text>
</comment>
<comment type="similarity">
    <text evidence="2">Belongs to the IspD/TarI cytidylyltransferase family. IspD subfamily.</text>
</comment>
<reference key="1">
    <citation type="journal article" date="1999" name="Nat. Genet.">
        <title>Comparative genomes of Chlamydia pneumoniae and C. trachomatis.</title>
        <authorList>
            <person name="Kalman S."/>
            <person name="Mitchell W.P."/>
            <person name="Marathe R."/>
            <person name="Lammel C.J."/>
            <person name="Fan J."/>
            <person name="Hyman R.W."/>
            <person name="Olinger L."/>
            <person name="Grimwood J."/>
            <person name="Davis R.W."/>
            <person name="Stephens R.S."/>
        </authorList>
    </citation>
    <scope>NUCLEOTIDE SEQUENCE [LARGE SCALE GENOMIC DNA]</scope>
    <source>
        <strain>CWL029</strain>
    </source>
</reference>
<reference key="2">
    <citation type="journal article" date="2000" name="Nucleic Acids Res.">
        <title>Genome sequences of Chlamydia trachomatis MoPn and Chlamydia pneumoniae AR39.</title>
        <authorList>
            <person name="Read T.D."/>
            <person name="Brunham R.C."/>
            <person name="Shen C."/>
            <person name="Gill S.R."/>
            <person name="Heidelberg J.F."/>
            <person name="White O."/>
            <person name="Hickey E.K."/>
            <person name="Peterson J.D."/>
            <person name="Utterback T.R."/>
            <person name="Berry K.J."/>
            <person name="Bass S."/>
            <person name="Linher K.D."/>
            <person name="Weidman J.F."/>
            <person name="Khouri H.M."/>
            <person name="Craven B."/>
            <person name="Bowman C."/>
            <person name="Dodson R.J."/>
            <person name="Gwinn M.L."/>
            <person name="Nelson W.C."/>
            <person name="DeBoy R.T."/>
            <person name="Kolonay J.F."/>
            <person name="McClarty G."/>
            <person name="Salzberg S.L."/>
            <person name="Eisen J.A."/>
            <person name="Fraser C.M."/>
        </authorList>
    </citation>
    <scope>NUCLEOTIDE SEQUENCE [LARGE SCALE GENOMIC DNA]</scope>
    <source>
        <strain>AR39</strain>
    </source>
</reference>
<reference key="3">
    <citation type="journal article" date="2000" name="Nucleic Acids Res.">
        <title>Comparison of whole genome sequences of Chlamydia pneumoniae J138 from Japan and CWL029 from USA.</title>
        <authorList>
            <person name="Shirai M."/>
            <person name="Hirakawa H."/>
            <person name="Kimoto M."/>
            <person name="Tabuchi M."/>
            <person name="Kishi F."/>
            <person name="Ouchi K."/>
            <person name="Shiba T."/>
            <person name="Ishii K."/>
            <person name="Hattori M."/>
            <person name="Kuhara S."/>
            <person name="Nakazawa T."/>
        </authorList>
    </citation>
    <scope>NUCLEOTIDE SEQUENCE [LARGE SCALE GENOMIC DNA]</scope>
    <source>
        <strain>J138</strain>
    </source>
</reference>
<reference key="4">
    <citation type="submission" date="2002-05" db="EMBL/GenBank/DDBJ databases">
        <title>The genome sequence of Chlamydia pneumoniae TW183 and comparison with other Chlamydia strains based on whole genome sequence analysis.</title>
        <authorList>
            <person name="Geng M.M."/>
            <person name="Schuhmacher A."/>
            <person name="Muehldorfer I."/>
            <person name="Bensch K.W."/>
            <person name="Schaefer K.P."/>
            <person name="Schneider S."/>
            <person name="Pohl T."/>
            <person name="Essig A."/>
            <person name="Marre R."/>
            <person name="Melchers K."/>
        </authorList>
    </citation>
    <scope>NUCLEOTIDE SEQUENCE [LARGE SCALE GENOMIC DNA]</scope>
    <source>
        <strain>TW-183</strain>
    </source>
</reference>
<dbReference type="EC" id="2.7.7.60"/>
<dbReference type="EMBL" id="AE001363">
    <property type="protein sequence ID" value="AAD18718.1"/>
    <property type="molecule type" value="Genomic_DNA"/>
</dbReference>
<dbReference type="EMBL" id="AE002161">
    <property type="protein sequence ID" value="AAF38046.1"/>
    <property type="molecule type" value="Genomic_DNA"/>
</dbReference>
<dbReference type="EMBL" id="BA000008">
    <property type="protein sequence ID" value="BAA98786.1"/>
    <property type="molecule type" value="Genomic_DNA"/>
</dbReference>
<dbReference type="EMBL" id="AE009440">
    <property type="protein sequence ID" value="AAP98532.1"/>
    <property type="molecule type" value="Genomic_DNA"/>
</dbReference>
<dbReference type="PIR" id="H72061">
    <property type="entry name" value="H72061"/>
</dbReference>
<dbReference type="PIR" id="H86562">
    <property type="entry name" value="H86562"/>
</dbReference>
<dbReference type="RefSeq" id="NP_224775.1">
    <property type="nucleotide sequence ID" value="NC_000922.1"/>
</dbReference>
<dbReference type="RefSeq" id="WP_010883217.1">
    <property type="nucleotide sequence ID" value="NZ_LN847257.1"/>
</dbReference>
<dbReference type="SMR" id="Q9Z7X5"/>
<dbReference type="STRING" id="406984.CPK_ORF01097"/>
<dbReference type="GeneID" id="45050623"/>
<dbReference type="KEGG" id="cpa:CP_0169"/>
<dbReference type="KEGG" id="cpj:yacM"/>
<dbReference type="KEGG" id="cpn:CPn_0579"/>
<dbReference type="KEGG" id="cpt:CpB0603"/>
<dbReference type="PATRIC" id="fig|115713.3.peg.645"/>
<dbReference type="eggNOG" id="COG1211">
    <property type="taxonomic scope" value="Bacteria"/>
</dbReference>
<dbReference type="HOGENOM" id="CLU_061281_2_2_0"/>
<dbReference type="OrthoDB" id="9806837at2"/>
<dbReference type="UniPathway" id="UPA00056">
    <property type="reaction ID" value="UER00093"/>
</dbReference>
<dbReference type="Proteomes" id="UP000000583">
    <property type="component" value="Chromosome"/>
</dbReference>
<dbReference type="Proteomes" id="UP000000801">
    <property type="component" value="Chromosome"/>
</dbReference>
<dbReference type="GO" id="GO:0050518">
    <property type="term" value="F:2-C-methyl-D-erythritol 4-phosphate cytidylyltransferase activity"/>
    <property type="evidence" value="ECO:0007669"/>
    <property type="project" value="UniProtKB-UniRule"/>
</dbReference>
<dbReference type="GO" id="GO:0019288">
    <property type="term" value="P:isopentenyl diphosphate biosynthetic process, methylerythritol 4-phosphate pathway"/>
    <property type="evidence" value="ECO:0007669"/>
    <property type="project" value="UniProtKB-UniRule"/>
</dbReference>
<dbReference type="CDD" id="cd02516">
    <property type="entry name" value="CDP-ME_synthetase"/>
    <property type="match status" value="1"/>
</dbReference>
<dbReference type="Gene3D" id="3.90.550.10">
    <property type="entry name" value="Spore Coat Polysaccharide Biosynthesis Protein SpsA, Chain A"/>
    <property type="match status" value="1"/>
</dbReference>
<dbReference type="HAMAP" id="MF_00108">
    <property type="entry name" value="IspD"/>
    <property type="match status" value="1"/>
</dbReference>
<dbReference type="InterPro" id="IPR001228">
    <property type="entry name" value="IspD"/>
</dbReference>
<dbReference type="InterPro" id="IPR034683">
    <property type="entry name" value="IspD/TarI"/>
</dbReference>
<dbReference type="InterPro" id="IPR050088">
    <property type="entry name" value="IspD/TarI_cytidylyltransf_bact"/>
</dbReference>
<dbReference type="InterPro" id="IPR018294">
    <property type="entry name" value="ISPD_synthase_CS"/>
</dbReference>
<dbReference type="InterPro" id="IPR029044">
    <property type="entry name" value="Nucleotide-diphossugar_trans"/>
</dbReference>
<dbReference type="NCBIfam" id="TIGR00453">
    <property type="entry name" value="ispD"/>
    <property type="match status" value="1"/>
</dbReference>
<dbReference type="PANTHER" id="PTHR32125">
    <property type="entry name" value="2-C-METHYL-D-ERYTHRITOL 4-PHOSPHATE CYTIDYLYLTRANSFERASE, CHLOROPLASTIC"/>
    <property type="match status" value="1"/>
</dbReference>
<dbReference type="PANTHER" id="PTHR32125:SF4">
    <property type="entry name" value="2-C-METHYL-D-ERYTHRITOL 4-PHOSPHATE CYTIDYLYLTRANSFERASE, CHLOROPLASTIC"/>
    <property type="match status" value="1"/>
</dbReference>
<dbReference type="Pfam" id="PF01128">
    <property type="entry name" value="IspD"/>
    <property type="match status" value="1"/>
</dbReference>
<dbReference type="SUPFAM" id="SSF53448">
    <property type="entry name" value="Nucleotide-diphospho-sugar transferases"/>
    <property type="match status" value="1"/>
</dbReference>
<dbReference type="PROSITE" id="PS01295">
    <property type="entry name" value="ISPD"/>
    <property type="match status" value="1"/>
</dbReference>
<keyword id="KW-0414">Isoprene biosynthesis</keyword>
<keyword id="KW-0548">Nucleotidyltransferase</keyword>
<keyword id="KW-0808">Transferase</keyword>
<accession>Q9Z7X5</accession>
<accession>Q9JQI1</accession>
<protein>
    <recommendedName>
        <fullName>2-C-methyl-D-erythritol 4-phosphate cytidylyltransferase</fullName>
        <ecNumber>2.7.7.60</ecNumber>
    </recommendedName>
    <alternativeName>
        <fullName>4-diphosphocytidyl-2C-methyl-D-erythritol synthase</fullName>
    </alternativeName>
    <alternativeName>
        <fullName>MEP cytidylyltransferase</fullName>
        <shortName>MCT</shortName>
    </alternativeName>
</protein>
<proteinExistence type="inferred from homology"/>
<name>ISPD_CHLPN</name>
<organism>
    <name type="scientific">Chlamydia pneumoniae</name>
    <name type="common">Chlamydophila pneumoniae</name>
    <dbReference type="NCBI Taxonomy" id="83558"/>
    <lineage>
        <taxon>Bacteria</taxon>
        <taxon>Pseudomonadati</taxon>
        <taxon>Chlamydiota</taxon>
        <taxon>Chlamydiia</taxon>
        <taxon>Chlamydiales</taxon>
        <taxon>Chlamydiaceae</taxon>
        <taxon>Chlamydia/Chlamydophila group</taxon>
        <taxon>Chlamydia</taxon>
    </lineage>
</organism>
<evidence type="ECO:0000250" key="1"/>
<evidence type="ECO:0000305" key="2"/>
<sequence length="211" mass="23447">MIKSSLILLSGGQGTRFGSKIPKQYLPLNGTPLVLHSLKILSSLPQIAEVIVVCDPSYQETFQEYPVSFAIPGERRQDSVFSGLQQVSYPWVIIHDGARPFIYPDEIHDLLETAEKIGATALASPIPYTIKQRNPVRTLDRDNLAIIHTPQCIKTEILREGLALAKEKQLTLVDDIEAAEIIGKPSQLVFNKHPQIKISYPEDLTIAQALL</sequence>
<gene>
    <name type="primary">ispD</name>
    <name type="ordered locus">CPn_0579</name>
    <name type="ordered locus">CP_0169</name>
    <name type="ordered locus">CpB0603</name>
</gene>